<reference key="1">
    <citation type="journal article" date="2002" name="Nucleic Acids Res.">
        <title>Genome sequence of Shigella flexneri 2a: insights into pathogenicity through comparison with genomes of Escherichia coli K12 and O157.</title>
        <authorList>
            <person name="Jin Q."/>
            <person name="Yuan Z."/>
            <person name="Xu J."/>
            <person name="Wang Y."/>
            <person name="Shen Y."/>
            <person name="Lu W."/>
            <person name="Wang J."/>
            <person name="Liu H."/>
            <person name="Yang J."/>
            <person name="Yang F."/>
            <person name="Zhang X."/>
            <person name="Zhang J."/>
            <person name="Yang G."/>
            <person name="Wu H."/>
            <person name="Qu D."/>
            <person name="Dong J."/>
            <person name="Sun L."/>
            <person name="Xue Y."/>
            <person name="Zhao A."/>
            <person name="Gao Y."/>
            <person name="Zhu J."/>
            <person name="Kan B."/>
            <person name="Ding K."/>
            <person name="Chen S."/>
            <person name="Cheng H."/>
            <person name="Yao Z."/>
            <person name="He B."/>
            <person name="Chen R."/>
            <person name="Ma D."/>
            <person name="Qiang B."/>
            <person name="Wen Y."/>
            <person name="Hou Y."/>
            <person name="Yu J."/>
        </authorList>
    </citation>
    <scope>NUCLEOTIDE SEQUENCE [LARGE SCALE GENOMIC DNA]</scope>
    <source>
        <strain>301 / Serotype 2a</strain>
    </source>
</reference>
<reference key="2">
    <citation type="journal article" date="2003" name="Infect. Immun.">
        <title>Complete genome sequence and comparative genomics of Shigella flexneri serotype 2a strain 2457T.</title>
        <authorList>
            <person name="Wei J."/>
            <person name="Goldberg M.B."/>
            <person name="Burland V."/>
            <person name="Venkatesan M.M."/>
            <person name="Deng W."/>
            <person name="Fournier G."/>
            <person name="Mayhew G.F."/>
            <person name="Plunkett G. III"/>
            <person name="Rose D.J."/>
            <person name="Darling A."/>
            <person name="Mau B."/>
            <person name="Perna N.T."/>
            <person name="Payne S.M."/>
            <person name="Runyen-Janecky L.J."/>
            <person name="Zhou S."/>
            <person name="Schwartz D.C."/>
            <person name="Blattner F.R."/>
        </authorList>
    </citation>
    <scope>NUCLEOTIDE SEQUENCE [LARGE SCALE GENOMIC DNA]</scope>
    <source>
        <strain>ATCC 700930 / 2457T / Serotype 2a</strain>
    </source>
</reference>
<gene>
    <name type="primary">fruK</name>
    <name type="ordered locus">SF2253</name>
    <name type="ordered locus">S2382</name>
</gene>
<sequence>MSRRVATITLNPAYDLVGFCPEIERGEVNLVKTTGLHAAGKGINVAKVLKDLGIDVTVGGFLGKDNQDGFQQLFSELGIANRFQVVQGRTRINVKLTEKDGEVTDFNFSGFEVTPADWERFVTDSLSWLGQFDMVCVSGSLPSGVSPEAFTDWMTRLRSQCPCIIFDSSREALVAGLKAAPWLVKPNRRELEIWAGRKLPEMKDVIEAAHALREQGIAHVVISLGAEGALWVNASGEWIAKPPSVDVVSTVGAGDSMVGGLIYGLLMRESSEHTLRLATAVAALAVSQSNVGITDRPQLAAMMARVDLQPFN</sequence>
<organism>
    <name type="scientific">Shigella flexneri</name>
    <dbReference type="NCBI Taxonomy" id="623"/>
    <lineage>
        <taxon>Bacteria</taxon>
        <taxon>Pseudomonadati</taxon>
        <taxon>Pseudomonadota</taxon>
        <taxon>Gammaproteobacteria</taxon>
        <taxon>Enterobacterales</taxon>
        <taxon>Enterobacteriaceae</taxon>
        <taxon>Shigella</taxon>
    </lineage>
</organism>
<name>K1PF_SHIFL</name>
<evidence type="ECO:0000250" key="1">
    <source>
        <dbReference type="UniProtKB" id="P0A9J6"/>
    </source>
</evidence>
<evidence type="ECO:0000250" key="2">
    <source>
        <dbReference type="UniProtKB" id="P0AEW9"/>
    </source>
</evidence>
<evidence type="ECO:0000305" key="3"/>
<dbReference type="EC" id="2.7.1.56" evidence="2"/>
<dbReference type="EMBL" id="AE005674">
    <property type="protein sequence ID" value="AAN43772.1"/>
    <property type="molecule type" value="Genomic_DNA"/>
</dbReference>
<dbReference type="EMBL" id="AE014073">
    <property type="protein sequence ID" value="AAP17589.1"/>
    <property type="molecule type" value="Genomic_DNA"/>
</dbReference>
<dbReference type="RefSeq" id="NP_708065.1">
    <property type="nucleotide sequence ID" value="NC_004337.2"/>
</dbReference>
<dbReference type="RefSeq" id="WP_000091263.1">
    <property type="nucleotide sequence ID" value="NZ_WPGW01000017.1"/>
</dbReference>
<dbReference type="SMR" id="P0AEX2"/>
<dbReference type="STRING" id="198214.SF2253"/>
<dbReference type="PaxDb" id="198214-SF2253"/>
<dbReference type="GeneID" id="1025458"/>
<dbReference type="GeneID" id="75206421"/>
<dbReference type="KEGG" id="sfl:SF2253"/>
<dbReference type="KEGG" id="sfx:S2382"/>
<dbReference type="PATRIC" id="fig|198214.7.peg.2698"/>
<dbReference type="HOGENOM" id="CLU_050013_0_1_6"/>
<dbReference type="Proteomes" id="UP000001006">
    <property type="component" value="Chromosome"/>
</dbReference>
<dbReference type="Proteomes" id="UP000002673">
    <property type="component" value="Chromosome"/>
</dbReference>
<dbReference type="GO" id="GO:0005829">
    <property type="term" value="C:cytosol"/>
    <property type="evidence" value="ECO:0007669"/>
    <property type="project" value="TreeGrafter"/>
</dbReference>
<dbReference type="GO" id="GO:0008662">
    <property type="term" value="F:1-phosphofructokinase activity"/>
    <property type="evidence" value="ECO:0007669"/>
    <property type="project" value="UniProtKB-EC"/>
</dbReference>
<dbReference type="GO" id="GO:0005524">
    <property type="term" value="F:ATP binding"/>
    <property type="evidence" value="ECO:0007669"/>
    <property type="project" value="UniProtKB-KW"/>
</dbReference>
<dbReference type="CDD" id="cd01164">
    <property type="entry name" value="FruK_PfkB_like"/>
    <property type="match status" value="1"/>
</dbReference>
<dbReference type="FunFam" id="3.40.1190.20:FF:000001">
    <property type="entry name" value="Phosphofructokinase"/>
    <property type="match status" value="1"/>
</dbReference>
<dbReference type="Gene3D" id="3.40.1190.20">
    <property type="match status" value="1"/>
</dbReference>
<dbReference type="InterPro" id="IPR022463">
    <property type="entry name" value="1-PFruKinase"/>
</dbReference>
<dbReference type="InterPro" id="IPR002173">
    <property type="entry name" value="Carboh/pur_kinase_PfkB_CS"/>
</dbReference>
<dbReference type="InterPro" id="IPR011611">
    <property type="entry name" value="PfkB_dom"/>
</dbReference>
<dbReference type="InterPro" id="IPR029056">
    <property type="entry name" value="Ribokinase-like"/>
</dbReference>
<dbReference type="InterPro" id="IPR017583">
    <property type="entry name" value="Tagatose/fructose_Pkinase"/>
</dbReference>
<dbReference type="NCBIfam" id="TIGR03168">
    <property type="entry name" value="1-PFK"/>
    <property type="match status" value="1"/>
</dbReference>
<dbReference type="NCBIfam" id="TIGR03828">
    <property type="entry name" value="pfkB"/>
    <property type="match status" value="1"/>
</dbReference>
<dbReference type="NCBIfam" id="NF007068">
    <property type="entry name" value="PRK09513.1"/>
    <property type="match status" value="1"/>
</dbReference>
<dbReference type="PANTHER" id="PTHR46566:SF5">
    <property type="entry name" value="1-PHOSPHOFRUCTOKINASE"/>
    <property type="match status" value="1"/>
</dbReference>
<dbReference type="PANTHER" id="PTHR46566">
    <property type="entry name" value="1-PHOSPHOFRUCTOKINASE-RELATED"/>
    <property type="match status" value="1"/>
</dbReference>
<dbReference type="Pfam" id="PF00294">
    <property type="entry name" value="PfkB"/>
    <property type="match status" value="1"/>
</dbReference>
<dbReference type="PIRSF" id="PIRSF000535">
    <property type="entry name" value="1PFK/6PFK/LacC"/>
    <property type="match status" value="1"/>
</dbReference>
<dbReference type="SUPFAM" id="SSF53613">
    <property type="entry name" value="Ribokinase-like"/>
    <property type="match status" value="1"/>
</dbReference>
<dbReference type="PROSITE" id="PS00583">
    <property type="entry name" value="PFKB_KINASES_1"/>
    <property type="match status" value="1"/>
</dbReference>
<dbReference type="PROSITE" id="PS00584">
    <property type="entry name" value="PFKB_KINASES_2"/>
    <property type="match status" value="1"/>
</dbReference>
<keyword id="KW-0067">ATP-binding</keyword>
<keyword id="KW-0418">Kinase</keyword>
<keyword id="KW-0547">Nucleotide-binding</keyword>
<keyword id="KW-1185">Reference proteome</keyword>
<keyword id="KW-0808">Transferase</keyword>
<feature type="chain" id="PRO_0000080080" description="1-phosphofructokinase">
    <location>
        <begin position="1"/>
        <end position="312"/>
    </location>
</feature>
<feature type="active site" description="Proton acceptor" evidence="1">
    <location>
        <position position="255"/>
    </location>
</feature>
<feature type="binding site" evidence="1">
    <location>
        <begin position="223"/>
        <end position="228"/>
    </location>
    <ligand>
        <name>ATP</name>
        <dbReference type="ChEBI" id="CHEBI:30616"/>
    </ligand>
</feature>
<feature type="binding site" evidence="1">
    <location>
        <begin position="254"/>
        <end position="255"/>
    </location>
    <ligand>
        <name>ATP</name>
        <dbReference type="ChEBI" id="CHEBI:30616"/>
    </ligand>
</feature>
<proteinExistence type="inferred from homology"/>
<comment type="function">
    <text evidence="2">Catalyzes the ATP-dependent phosphorylation of fructose-l-phosphate to fructose-l,6-bisphosphate.</text>
</comment>
<comment type="catalytic activity">
    <reaction evidence="2">
        <text>beta-D-fructose 1-phosphate + ATP = beta-D-fructose 1,6-bisphosphate + ADP + H(+)</text>
        <dbReference type="Rhea" id="RHEA:14213"/>
        <dbReference type="ChEBI" id="CHEBI:15378"/>
        <dbReference type="ChEBI" id="CHEBI:30616"/>
        <dbReference type="ChEBI" id="CHEBI:32966"/>
        <dbReference type="ChEBI" id="CHEBI:138881"/>
        <dbReference type="ChEBI" id="CHEBI:456216"/>
        <dbReference type="EC" id="2.7.1.56"/>
    </reaction>
</comment>
<comment type="similarity">
    <text evidence="3">Belongs to the carbohydrate kinase PfkB family.</text>
</comment>
<protein>
    <recommendedName>
        <fullName evidence="2">1-phosphofructokinase</fullName>
        <ecNumber evidence="2">2.7.1.56</ecNumber>
    </recommendedName>
    <alternativeName>
        <fullName evidence="2">Fructose 1-phosphate kinase</fullName>
        <shortName evidence="2">Fru1PK</shortName>
    </alternativeName>
</protein>
<accession>P0AEX2</accession>
<accession>P23539</accession>